<accession>Q1RGE4</accession>
<proteinExistence type="inferred from homology"/>
<gene>
    <name evidence="1" type="primary">surA</name>
    <name type="ordered locus">UTI89_C0060</name>
</gene>
<organism>
    <name type="scientific">Escherichia coli (strain UTI89 / UPEC)</name>
    <dbReference type="NCBI Taxonomy" id="364106"/>
    <lineage>
        <taxon>Bacteria</taxon>
        <taxon>Pseudomonadati</taxon>
        <taxon>Pseudomonadota</taxon>
        <taxon>Gammaproteobacteria</taxon>
        <taxon>Enterobacterales</taxon>
        <taxon>Enterobacteriaceae</taxon>
        <taxon>Escherichia</taxon>
    </lineage>
</organism>
<keyword id="KW-0143">Chaperone</keyword>
<keyword id="KW-0413">Isomerase</keyword>
<keyword id="KW-0574">Periplasm</keyword>
<keyword id="KW-0677">Repeat</keyword>
<keyword id="KW-0697">Rotamase</keyword>
<keyword id="KW-0732">Signal</keyword>
<dbReference type="EC" id="5.2.1.8" evidence="1"/>
<dbReference type="EMBL" id="CP000243">
    <property type="protein sequence ID" value="ABE05570.1"/>
    <property type="molecule type" value="Genomic_DNA"/>
</dbReference>
<dbReference type="RefSeq" id="WP_000800457.1">
    <property type="nucleotide sequence ID" value="NZ_CP064825.1"/>
</dbReference>
<dbReference type="SMR" id="Q1RGE4"/>
<dbReference type="GeneID" id="93777382"/>
<dbReference type="KEGG" id="eci:UTI89_C0060"/>
<dbReference type="HOGENOM" id="CLU_034646_11_0_6"/>
<dbReference type="Proteomes" id="UP000001952">
    <property type="component" value="Chromosome"/>
</dbReference>
<dbReference type="GO" id="GO:0030288">
    <property type="term" value="C:outer membrane-bounded periplasmic space"/>
    <property type="evidence" value="ECO:0007669"/>
    <property type="project" value="InterPro"/>
</dbReference>
<dbReference type="GO" id="GO:0042277">
    <property type="term" value="F:peptide binding"/>
    <property type="evidence" value="ECO:0007669"/>
    <property type="project" value="InterPro"/>
</dbReference>
<dbReference type="GO" id="GO:0003755">
    <property type="term" value="F:peptidyl-prolyl cis-trans isomerase activity"/>
    <property type="evidence" value="ECO:0007669"/>
    <property type="project" value="UniProtKB-UniRule"/>
</dbReference>
<dbReference type="GO" id="GO:0051082">
    <property type="term" value="F:unfolded protein binding"/>
    <property type="evidence" value="ECO:0007669"/>
    <property type="project" value="UniProtKB-UniRule"/>
</dbReference>
<dbReference type="GO" id="GO:0043165">
    <property type="term" value="P:Gram-negative-bacterium-type cell outer membrane assembly"/>
    <property type="evidence" value="ECO:0007669"/>
    <property type="project" value="InterPro"/>
</dbReference>
<dbReference type="GO" id="GO:0006457">
    <property type="term" value="P:protein folding"/>
    <property type="evidence" value="ECO:0007669"/>
    <property type="project" value="UniProtKB-UniRule"/>
</dbReference>
<dbReference type="GO" id="GO:0050821">
    <property type="term" value="P:protein stabilization"/>
    <property type="evidence" value="ECO:0007669"/>
    <property type="project" value="InterPro"/>
</dbReference>
<dbReference type="FunFam" id="1.10.4030.10:FF:000002">
    <property type="entry name" value="Chaperone SurA"/>
    <property type="match status" value="1"/>
</dbReference>
<dbReference type="FunFam" id="3.10.50.40:FF:000007">
    <property type="entry name" value="Chaperone SurA"/>
    <property type="match status" value="1"/>
</dbReference>
<dbReference type="Gene3D" id="3.10.50.40">
    <property type="match status" value="2"/>
</dbReference>
<dbReference type="Gene3D" id="1.10.4030.10">
    <property type="entry name" value="Porin chaperone SurA, peptide-binding domain"/>
    <property type="match status" value="2"/>
</dbReference>
<dbReference type="HAMAP" id="MF_01183">
    <property type="entry name" value="Chaperone_SurA"/>
    <property type="match status" value="1"/>
</dbReference>
<dbReference type="InterPro" id="IPR050280">
    <property type="entry name" value="OMP_Chaperone_SurA"/>
</dbReference>
<dbReference type="InterPro" id="IPR046357">
    <property type="entry name" value="PPIase_dom_sf"/>
</dbReference>
<dbReference type="InterPro" id="IPR000297">
    <property type="entry name" value="PPIase_PpiC"/>
</dbReference>
<dbReference type="InterPro" id="IPR023058">
    <property type="entry name" value="PPIase_PpiC_CS"/>
</dbReference>
<dbReference type="InterPro" id="IPR023034">
    <property type="entry name" value="PPIase_SurA"/>
</dbReference>
<dbReference type="InterPro" id="IPR015391">
    <property type="entry name" value="SurA_N"/>
</dbReference>
<dbReference type="InterPro" id="IPR027304">
    <property type="entry name" value="Trigger_fact/SurA_dom_sf"/>
</dbReference>
<dbReference type="NCBIfam" id="NF008038">
    <property type="entry name" value="PRK10770.1"/>
    <property type="match status" value="1"/>
</dbReference>
<dbReference type="PANTHER" id="PTHR47637">
    <property type="entry name" value="CHAPERONE SURA"/>
    <property type="match status" value="1"/>
</dbReference>
<dbReference type="PANTHER" id="PTHR47637:SF1">
    <property type="entry name" value="CHAPERONE SURA"/>
    <property type="match status" value="1"/>
</dbReference>
<dbReference type="Pfam" id="PF00639">
    <property type="entry name" value="Rotamase"/>
    <property type="match status" value="1"/>
</dbReference>
<dbReference type="Pfam" id="PF13616">
    <property type="entry name" value="Rotamase_3"/>
    <property type="match status" value="1"/>
</dbReference>
<dbReference type="Pfam" id="PF09312">
    <property type="entry name" value="SurA_N"/>
    <property type="match status" value="1"/>
</dbReference>
<dbReference type="SUPFAM" id="SSF54534">
    <property type="entry name" value="FKBP-like"/>
    <property type="match status" value="2"/>
</dbReference>
<dbReference type="SUPFAM" id="SSF109998">
    <property type="entry name" value="Triger factor/SurA peptide-binding domain-like"/>
    <property type="match status" value="1"/>
</dbReference>
<dbReference type="PROSITE" id="PS01096">
    <property type="entry name" value="PPIC_PPIASE_1"/>
    <property type="match status" value="2"/>
</dbReference>
<dbReference type="PROSITE" id="PS50198">
    <property type="entry name" value="PPIC_PPIASE_2"/>
    <property type="match status" value="2"/>
</dbReference>
<comment type="function">
    <text evidence="1">Chaperone involved in the correct folding and assembly of outer membrane proteins. Recognizes specific patterns of aromatic residues and the orientation of their side chains, which are found more frequently in integral outer membrane proteins. May act in both early periplasmic and late outer membrane-associated steps of protein maturation.</text>
</comment>
<comment type="catalytic activity">
    <reaction evidence="1">
        <text>[protein]-peptidylproline (omega=180) = [protein]-peptidylproline (omega=0)</text>
        <dbReference type="Rhea" id="RHEA:16237"/>
        <dbReference type="Rhea" id="RHEA-COMP:10747"/>
        <dbReference type="Rhea" id="RHEA-COMP:10748"/>
        <dbReference type="ChEBI" id="CHEBI:83833"/>
        <dbReference type="ChEBI" id="CHEBI:83834"/>
        <dbReference type="EC" id="5.2.1.8"/>
    </reaction>
</comment>
<comment type="subcellular location">
    <subcellularLocation>
        <location evidence="1">Periplasm</location>
    </subcellularLocation>
    <text evidence="1">Is capable of associating with the outer membrane.</text>
</comment>
<comment type="domain">
    <text evidence="1">The PPIase activity resides only in the second parvulin domain. The N-terminal region and the C-terminal tail are necessary and sufficient for the chaperone activity of SurA. The PPIase activity is dispensable for SurA to function as a chaperone. The N-terminal region and the C-terminal tail are also required for porin recognition.</text>
</comment>
<name>SURA_ECOUT</name>
<feature type="signal peptide" evidence="1">
    <location>
        <begin position="1"/>
        <end position="20"/>
    </location>
</feature>
<feature type="chain" id="PRO_0000270014" description="Chaperone SurA">
    <location>
        <begin position="21"/>
        <end position="428"/>
    </location>
</feature>
<feature type="domain" description="PpiC 1" evidence="1">
    <location>
        <begin position="171"/>
        <end position="272"/>
    </location>
</feature>
<feature type="domain" description="PpiC 2" evidence="1">
    <location>
        <begin position="282"/>
        <end position="382"/>
    </location>
</feature>
<protein>
    <recommendedName>
        <fullName evidence="1">Chaperone SurA</fullName>
    </recommendedName>
    <alternativeName>
        <fullName evidence="1">Peptidyl-prolyl cis-trans isomerase SurA</fullName>
        <shortName evidence="1">PPIase SurA</shortName>
        <ecNumber evidence="1">5.2.1.8</ecNumber>
    </alternativeName>
    <alternativeName>
        <fullName evidence="1">Rotamase SurA</fullName>
    </alternativeName>
</protein>
<sequence length="428" mass="47284">MKNWKTLLLGIAMIANTSFAAPQVVDKVAAVVNNGVVLESDVDGLMQSVKLNAAQARQQLPDDATLRHQIMERLIMDQIILQMGQKMGVKISDEQLDQAIANIAKQNNMTLDQMRSRLAYDGLNYNTYRNQIRKEMIISEVRNNEVRRRITILPQEVESLAQQVGNQNDASTELNLSHILIPLPENPTSDQVNEAESQARAIVDQARNGADFGKLAIAHSADQQALNGGQMGWGRIQELPGIFAQALSTAKKGDIVGPIRSGVGFHILKVNDLRGESKNISVTEVHARHILLKPSPIMTDEQARVKLEQIAADIKSGKTTFAAAAKEFSQDPGSANQGGDLGWATPDIFDPAFRDALTRLNKGQMSAPVHSSFGWHLIELLDTRNVDKTDAAQKDRAYRMLMNRKFSEEAASWMQEQRASAYVKILSN</sequence>
<reference key="1">
    <citation type="journal article" date="2006" name="Proc. Natl. Acad. Sci. U.S.A.">
        <title>Identification of genes subject to positive selection in uropathogenic strains of Escherichia coli: a comparative genomics approach.</title>
        <authorList>
            <person name="Chen S.L."/>
            <person name="Hung C.-S."/>
            <person name="Xu J."/>
            <person name="Reigstad C.S."/>
            <person name="Magrini V."/>
            <person name="Sabo A."/>
            <person name="Blasiar D."/>
            <person name="Bieri T."/>
            <person name="Meyer R.R."/>
            <person name="Ozersky P."/>
            <person name="Armstrong J.R."/>
            <person name="Fulton R.S."/>
            <person name="Latreille J.P."/>
            <person name="Spieth J."/>
            <person name="Hooton T.M."/>
            <person name="Mardis E.R."/>
            <person name="Hultgren S.J."/>
            <person name="Gordon J.I."/>
        </authorList>
    </citation>
    <scope>NUCLEOTIDE SEQUENCE [LARGE SCALE GENOMIC DNA]</scope>
    <source>
        <strain>UTI89 / UPEC</strain>
    </source>
</reference>
<evidence type="ECO:0000255" key="1">
    <source>
        <dbReference type="HAMAP-Rule" id="MF_01183"/>
    </source>
</evidence>